<sequence length="177" mass="19709">MSRVGKLPITIPEGVKVGLNDLEVKISGPKGELSKTFKGNIAIIMEENKLVVKPLAVNKNARAMWGTARSIICNMITGVKEGFKLKLEINGVGYRAMVKGKYLNLMLAKSHNTKIEIPSNIKIDLPKQNIILLEGIDKEKLGQFASIIIKQRPPEPYKGKGIKFENKFIQRKEGKKN</sequence>
<keyword id="KW-1185">Reference proteome</keyword>
<keyword id="KW-0687">Ribonucleoprotein</keyword>
<keyword id="KW-0689">Ribosomal protein</keyword>
<keyword id="KW-0694">RNA-binding</keyword>
<keyword id="KW-0699">rRNA-binding</keyword>
<organism>
    <name type="scientific">Rickettsia prowazekii (strain Madrid E)</name>
    <dbReference type="NCBI Taxonomy" id="272947"/>
    <lineage>
        <taxon>Bacteria</taxon>
        <taxon>Pseudomonadati</taxon>
        <taxon>Pseudomonadota</taxon>
        <taxon>Alphaproteobacteria</taxon>
        <taxon>Rickettsiales</taxon>
        <taxon>Rickettsiaceae</taxon>
        <taxon>Rickettsieae</taxon>
        <taxon>Rickettsia</taxon>
        <taxon>typhus group</taxon>
    </lineage>
</organism>
<reference key="1">
    <citation type="journal article" date="1998" name="Nature">
        <title>The genome sequence of Rickettsia prowazekii and the origin of mitochondria.</title>
        <authorList>
            <person name="Andersson S.G.E."/>
            <person name="Zomorodipour A."/>
            <person name="Andersson J.O."/>
            <person name="Sicheritz-Ponten T."/>
            <person name="Alsmark U.C.M."/>
            <person name="Podowski R.M."/>
            <person name="Naeslund A.K."/>
            <person name="Eriksson A.-S."/>
            <person name="Winkler H.H."/>
            <person name="Kurland C.G."/>
        </authorList>
    </citation>
    <scope>NUCLEOTIDE SEQUENCE [LARGE SCALE GENOMIC DNA]</scope>
    <source>
        <strain>Madrid E</strain>
    </source>
</reference>
<protein>
    <recommendedName>
        <fullName evidence="1">Large ribosomal subunit protein uL6</fullName>
    </recommendedName>
    <alternativeName>
        <fullName evidence="2">50S ribosomal protein L6</fullName>
    </alternativeName>
</protein>
<gene>
    <name evidence="1" type="primary">rplF</name>
    <name type="ordered locus">RP644</name>
</gene>
<dbReference type="EMBL" id="AJ235272">
    <property type="protein sequence ID" value="CAA15084.1"/>
    <property type="molecule type" value="Genomic_DNA"/>
</dbReference>
<dbReference type="PIR" id="B71670">
    <property type="entry name" value="B71670"/>
</dbReference>
<dbReference type="RefSeq" id="NP_221008.1">
    <property type="nucleotide sequence ID" value="NC_000963.1"/>
</dbReference>
<dbReference type="RefSeq" id="WP_004596224.1">
    <property type="nucleotide sequence ID" value="NC_000963.1"/>
</dbReference>
<dbReference type="SMR" id="Q9ZCS0"/>
<dbReference type="STRING" id="272947.gene:17555721"/>
<dbReference type="EnsemblBacteria" id="CAA15084">
    <property type="protein sequence ID" value="CAA15084"/>
    <property type="gene ID" value="CAA15084"/>
</dbReference>
<dbReference type="GeneID" id="57569769"/>
<dbReference type="KEGG" id="rpr:RP644"/>
<dbReference type="PATRIC" id="fig|272947.5.peg.666"/>
<dbReference type="eggNOG" id="COG0097">
    <property type="taxonomic scope" value="Bacteria"/>
</dbReference>
<dbReference type="HOGENOM" id="CLU_065464_1_2_5"/>
<dbReference type="OrthoDB" id="9805007at2"/>
<dbReference type="Proteomes" id="UP000002480">
    <property type="component" value="Chromosome"/>
</dbReference>
<dbReference type="GO" id="GO:1990904">
    <property type="term" value="C:ribonucleoprotein complex"/>
    <property type="evidence" value="ECO:0007669"/>
    <property type="project" value="UniProtKB-KW"/>
</dbReference>
<dbReference type="GO" id="GO:0005840">
    <property type="term" value="C:ribosome"/>
    <property type="evidence" value="ECO:0007669"/>
    <property type="project" value="UniProtKB-KW"/>
</dbReference>
<dbReference type="GO" id="GO:0019843">
    <property type="term" value="F:rRNA binding"/>
    <property type="evidence" value="ECO:0007669"/>
    <property type="project" value="UniProtKB-UniRule"/>
</dbReference>
<dbReference type="GO" id="GO:0003735">
    <property type="term" value="F:structural constituent of ribosome"/>
    <property type="evidence" value="ECO:0007669"/>
    <property type="project" value="InterPro"/>
</dbReference>
<dbReference type="GO" id="GO:0002181">
    <property type="term" value="P:cytoplasmic translation"/>
    <property type="evidence" value="ECO:0007669"/>
    <property type="project" value="TreeGrafter"/>
</dbReference>
<dbReference type="Gene3D" id="3.90.930.12">
    <property type="entry name" value="Ribosomal protein L6, alpha-beta domain"/>
    <property type="match status" value="2"/>
</dbReference>
<dbReference type="HAMAP" id="MF_01365_B">
    <property type="entry name" value="Ribosomal_uL6_B"/>
    <property type="match status" value="1"/>
</dbReference>
<dbReference type="InterPro" id="IPR000702">
    <property type="entry name" value="Ribosomal_uL6-like"/>
</dbReference>
<dbReference type="InterPro" id="IPR036789">
    <property type="entry name" value="Ribosomal_uL6-like_a/b-dom_sf"/>
</dbReference>
<dbReference type="InterPro" id="IPR020040">
    <property type="entry name" value="Ribosomal_uL6_a/b-dom"/>
</dbReference>
<dbReference type="InterPro" id="IPR019906">
    <property type="entry name" value="Ribosomal_uL6_bac-type"/>
</dbReference>
<dbReference type="InterPro" id="IPR002358">
    <property type="entry name" value="Ribosomal_uL6_CS"/>
</dbReference>
<dbReference type="NCBIfam" id="TIGR03654">
    <property type="entry name" value="L6_bact"/>
    <property type="match status" value="1"/>
</dbReference>
<dbReference type="PANTHER" id="PTHR11655">
    <property type="entry name" value="60S/50S RIBOSOMAL PROTEIN L6/L9"/>
    <property type="match status" value="1"/>
</dbReference>
<dbReference type="PANTHER" id="PTHR11655:SF14">
    <property type="entry name" value="LARGE RIBOSOMAL SUBUNIT PROTEIN UL6M"/>
    <property type="match status" value="1"/>
</dbReference>
<dbReference type="Pfam" id="PF00347">
    <property type="entry name" value="Ribosomal_L6"/>
    <property type="match status" value="2"/>
</dbReference>
<dbReference type="PIRSF" id="PIRSF002162">
    <property type="entry name" value="Ribosomal_L6"/>
    <property type="match status" value="1"/>
</dbReference>
<dbReference type="PRINTS" id="PR00059">
    <property type="entry name" value="RIBOSOMALL6"/>
</dbReference>
<dbReference type="SUPFAM" id="SSF56053">
    <property type="entry name" value="Ribosomal protein L6"/>
    <property type="match status" value="2"/>
</dbReference>
<dbReference type="PROSITE" id="PS00525">
    <property type="entry name" value="RIBOSOMAL_L6_1"/>
    <property type="match status" value="1"/>
</dbReference>
<name>RL6_RICPR</name>
<comment type="function">
    <text evidence="1">This protein binds to the 23S rRNA, and is important in its secondary structure. It is located near the subunit interface in the base of the L7/L12 stalk, and near the tRNA binding site of the peptidyltransferase center.</text>
</comment>
<comment type="subunit">
    <text evidence="1">Part of the 50S ribosomal subunit.</text>
</comment>
<comment type="similarity">
    <text evidence="1">Belongs to the universal ribosomal protein uL6 family.</text>
</comment>
<feature type="chain" id="PRO_0000131064" description="Large ribosomal subunit protein uL6">
    <location>
        <begin position="1"/>
        <end position="177"/>
    </location>
</feature>
<proteinExistence type="inferred from homology"/>
<evidence type="ECO:0000255" key="1">
    <source>
        <dbReference type="HAMAP-Rule" id="MF_01365"/>
    </source>
</evidence>
<evidence type="ECO:0000305" key="2"/>
<accession>Q9ZCS0</accession>